<gene>
    <name type="ordered locus">At2g02148</name>
    <name type="ORF">F5O4.8</name>
</gene>
<evidence type="ECO:0000256" key="1">
    <source>
        <dbReference type="SAM" id="MobiDB-lite"/>
    </source>
</evidence>
<evidence type="ECO:0000305" key="2"/>
<keyword id="KW-1185">Reference proteome</keyword>
<organism>
    <name type="scientific">Arabidopsis thaliana</name>
    <name type="common">Mouse-ear cress</name>
    <dbReference type="NCBI Taxonomy" id="3702"/>
    <lineage>
        <taxon>Eukaryota</taxon>
        <taxon>Viridiplantae</taxon>
        <taxon>Streptophyta</taxon>
        <taxon>Embryophyta</taxon>
        <taxon>Tracheophyta</taxon>
        <taxon>Spermatophyta</taxon>
        <taxon>Magnoliopsida</taxon>
        <taxon>eudicotyledons</taxon>
        <taxon>Gunneridae</taxon>
        <taxon>Pentapetalae</taxon>
        <taxon>rosids</taxon>
        <taxon>malvids</taxon>
        <taxon>Brassicales</taxon>
        <taxon>Brassicaceae</taxon>
        <taxon>Camelineae</taxon>
        <taxon>Arabidopsis</taxon>
    </lineage>
</organism>
<sequence>MGARVQVQHYNLGSSDSYIATSLHDLNSVDGPPRDIDGIGGAVGRDGDSLDNDGDSSSADCMHESYRNSMQIGVEEGGSNMENKGSAYIMLNIEDVSPIEAARGRFLQIILDYFISQHVIEVCESKRDHDVDSGGRDSNSKVKRKSDDTRYEGDPSFALPLMYIANLYETLVGEANVRLASLNGIRDKTIGVALEAAGGLYRKLTKKFPKKGTCMYRRRELATSVETRTRFPELVIHEEKRVRFVVVNGLDIVEKPSDLPIEEAEWFKRLTGRNEVAISARDYKFYCPRRKHRRLQNSVSSINGLPTFPGIDSSTLANTQGFREDQSQQQHTPSPSKHHMSSLSHQFHQSIHQSHQHHQSIYQSQHAATHYPSQNHQCDPELSHTQMACLQPLTGGHVMPNSPAKFCDQCGAQYLRETSKFCSECGSKRLGI</sequence>
<dbReference type="EMBL" id="AC005936">
    <property type="protein sequence ID" value="AAC97219.1"/>
    <property type="status" value="ALT_SEQ"/>
    <property type="molecule type" value="Genomic_DNA"/>
</dbReference>
<dbReference type="EMBL" id="CP002685">
    <property type="protein sequence ID" value="AEC05552.1"/>
    <property type="molecule type" value="Genomic_DNA"/>
</dbReference>
<dbReference type="EMBL" id="CP002685">
    <property type="protein sequence ID" value="ANM61472.1"/>
    <property type="molecule type" value="Genomic_DNA"/>
</dbReference>
<dbReference type="EMBL" id="CP002685">
    <property type="protein sequence ID" value="ANM61473.1"/>
    <property type="molecule type" value="Genomic_DNA"/>
</dbReference>
<dbReference type="EMBL" id="CP002685">
    <property type="protein sequence ID" value="ANM61474.1"/>
    <property type="molecule type" value="Genomic_DNA"/>
</dbReference>
<dbReference type="EMBL" id="AK221550">
    <property type="protein sequence ID" value="BAD94934.1"/>
    <property type="molecule type" value="mRNA"/>
</dbReference>
<dbReference type="PIR" id="E84433">
    <property type="entry name" value="E84433"/>
</dbReference>
<dbReference type="RefSeq" id="NP_001189499.1">
    <property type="nucleotide sequence ID" value="NM_001202570.2"/>
</dbReference>
<dbReference type="RefSeq" id="NP_001323689.1">
    <property type="nucleotide sequence ID" value="NM_001335097.1"/>
</dbReference>
<dbReference type="RefSeq" id="NP_001323690.1">
    <property type="nucleotide sequence ID" value="NM_001335098.1"/>
</dbReference>
<dbReference type="RefSeq" id="NP_001323691.1">
    <property type="nucleotide sequence ID" value="NM_001335099.1"/>
</dbReference>
<dbReference type="FunCoup" id="Q56XX3">
    <property type="interactions" value="2133"/>
</dbReference>
<dbReference type="iPTMnet" id="Q56XX3"/>
<dbReference type="PaxDb" id="3702-AT2G02148.1"/>
<dbReference type="ProteomicsDB" id="243185"/>
<dbReference type="EnsemblPlants" id="AT2G02148.1">
    <property type="protein sequence ID" value="AT2G02148.1"/>
    <property type="gene ID" value="AT2G02148"/>
</dbReference>
<dbReference type="EnsemblPlants" id="AT2G02148.3">
    <property type="protein sequence ID" value="AT2G02148.3"/>
    <property type="gene ID" value="AT2G02148"/>
</dbReference>
<dbReference type="EnsemblPlants" id="AT2G02148.4">
    <property type="protein sequence ID" value="AT2G02148.4"/>
    <property type="gene ID" value="AT2G02148"/>
</dbReference>
<dbReference type="EnsemblPlants" id="AT2G02148.5">
    <property type="protein sequence ID" value="AT2G02148.5"/>
    <property type="gene ID" value="AT2G02148"/>
</dbReference>
<dbReference type="GeneID" id="10723082"/>
<dbReference type="Gramene" id="AT2G02148.1">
    <property type="protein sequence ID" value="AT2G02148.1"/>
    <property type="gene ID" value="AT2G02148"/>
</dbReference>
<dbReference type="Gramene" id="AT2G02148.3">
    <property type="protein sequence ID" value="AT2G02148.3"/>
    <property type="gene ID" value="AT2G02148"/>
</dbReference>
<dbReference type="Gramene" id="AT2G02148.4">
    <property type="protein sequence ID" value="AT2G02148.4"/>
    <property type="gene ID" value="AT2G02148"/>
</dbReference>
<dbReference type="Gramene" id="AT2G02148.5">
    <property type="protein sequence ID" value="AT2G02148.5"/>
    <property type="gene ID" value="AT2G02148"/>
</dbReference>
<dbReference type="KEGG" id="ath:AT2G02148"/>
<dbReference type="Araport" id="AT2G02148"/>
<dbReference type="TAIR" id="AT2G02148"/>
<dbReference type="eggNOG" id="KOG4197">
    <property type="taxonomic scope" value="Eukaryota"/>
</dbReference>
<dbReference type="HOGENOM" id="CLU_046213_0_0_1"/>
<dbReference type="InParanoid" id="Q56XX3"/>
<dbReference type="OMA" id="YVLPLMY"/>
<dbReference type="PRO" id="PR:Q56XX3"/>
<dbReference type="Proteomes" id="UP000006548">
    <property type="component" value="Chromosome 2"/>
</dbReference>
<dbReference type="ExpressionAtlas" id="Q56XX3">
    <property type="expression patterns" value="baseline and differential"/>
</dbReference>
<dbReference type="InterPro" id="IPR026319">
    <property type="entry name" value="ZC2HC1A/B-like"/>
</dbReference>
<dbReference type="PANTHER" id="PTHR13555">
    <property type="entry name" value="C2H2 ZINC FINGER CGI-62-RELATED"/>
    <property type="match status" value="1"/>
</dbReference>
<dbReference type="PANTHER" id="PTHR13555:SF36">
    <property type="entry name" value="ZINC FINGER C2HC DOMAIN-CONTAINING PROTEIN 1B"/>
    <property type="match status" value="1"/>
</dbReference>
<proteinExistence type="evidence at transcript level"/>
<name>Y2215_ARATH</name>
<comment type="sequence caution" evidence="2">
    <conflict type="erroneous gene model prediction">
        <sequence resource="EMBL-CDS" id="AAC97219"/>
    </conflict>
    <text>The predicted gene has been split into 2 genes: At2g02148 and At2g02150.</text>
</comment>
<feature type="chain" id="PRO_0000355997" description="Uncharacterized protein At2g02148">
    <location>
        <begin position="1"/>
        <end position="432"/>
    </location>
</feature>
<feature type="region of interest" description="Disordered" evidence="1">
    <location>
        <begin position="37"/>
        <end position="61"/>
    </location>
</feature>
<feature type="region of interest" description="Disordered" evidence="1">
    <location>
        <begin position="127"/>
        <end position="151"/>
    </location>
</feature>
<feature type="region of interest" description="Disordered" evidence="1">
    <location>
        <begin position="298"/>
        <end position="378"/>
    </location>
</feature>
<feature type="compositionally biased region" description="Polar residues" evidence="1">
    <location>
        <begin position="312"/>
        <end position="335"/>
    </location>
</feature>
<feature type="compositionally biased region" description="Low complexity" evidence="1">
    <location>
        <begin position="341"/>
        <end position="366"/>
    </location>
</feature>
<reference key="1">
    <citation type="journal article" date="1999" name="Nature">
        <title>Sequence and analysis of chromosome 2 of the plant Arabidopsis thaliana.</title>
        <authorList>
            <person name="Lin X."/>
            <person name="Kaul S."/>
            <person name="Rounsley S.D."/>
            <person name="Shea T.P."/>
            <person name="Benito M.-I."/>
            <person name="Town C.D."/>
            <person name="Fujii C.Y."/>
            <person name="Mason T.M."/>
            <person name="Bowman C.L."/>
            <person name="Barnstead M.E."/>
            <person name="Feldblyum T.V."/>
            <person name="Buell C.R."/>
            <person name="Ketchum K.A."/>
            <person name="Lee J.J."/>
            <person name="Ronning C.M."/>
            <person name="Koo H.L."/>
            <person name="Moffat K.S."/>
            <person name="Cronin L.A."/>
            <person name="Shen M."/>
            <person name="Pai G."/>
            <person name="Van Aken S."/>
            <person name="Umayam L."/>
            <person name="Tallon L.J."/>
            <person name="Gill J.E."/>
            <person name="Adams M.D."/>
            <person name="Carrera A.J."/>
            <person name="Creasy T.H."/>
            <person name="Goodman H.M."/>
            <person name="Somerville C.R."/>
            <person name="Copenhaver G.P."/>
            <person name="Preuss D."/>
            <person name="Nierman W.C."/>
            <person name="White O."/>
            <person name="Eisen J.A."/>
            <person name="Salzberg S.L."/>
            <person name="Fraser C.M."/>
            <person name="Venter J.C."/>
        </authorList>
    </citation>
    <scope>NUCLEOTIDE SEQUENCE [LARGE SCALE GENOMIC DNA]</scope>
    <source>
        <strain>cv. Columbia</strain>
    </source>
</reference>
<reference key="2">
    <citation type="journal article" date="2017" name="Plant J.">
        <title>Araport11: a complete reannotation of the Arabidopsis thaliana reference genome.</title>
        <authorList>
            <person name="Cheng C.Y."/>
            <person name="Krishnakumar V."/>
            <person name="Chan A.P."/>
            <person name="Thibaud-Nissen F."/>
            <person name="Schobel S."/>
            <person name="Town C.D."/>
        </authorList>
    </citation>
    <scope>GENOME REANNOTATION</scope>
    <source>
        <strain>cv. Columbia</strain>
    </source>
</reference>
<reference key="3">
    <citation type="submission" date="2005-03" db="EMBL/GenBank/DDBJ databases">
        <title>Large-scale analysis of RIKEN Arabidopsis full-length (RAFL) cDNAs.</title>
        <authorList>
            <person name="Totoki Y."/>
            <person name="Seki M."/>
            <person name="Ishida J."/>
            <person name="Nakajima M."/>
            <person name="Enju A."/>
            <person name="Kamiya A."/>
            <person name="Narusaka M."/>
            <person name="Shin-i T."/>
            <person name="Nakagawa M."/>
            <person name="Sakamoto N."/>
            <person name="Oishi K."/>
            <person name="Kohara Y."/>
            <person name="Kobayashi M."/>
            <person name="Toyoda A."/>
            <person name="Sakaki Y."/>
            <person name="Sakurai T."/>
            <person name="Iida K."/>
            <person name="Akiyama K."/>
            <person name="Satou M."/>
            <person name="Toyoda T."/>
            <person name="Konagaya A."/>
            <person name="Carninci P."/>
            <person name="Kawai J."/>
            <person name="Hayashizaki Y."/>
            <person name="Shinozaki K."/>
        </authorList>
    </citation>
    <scope>NUCLEOTIDE SEQUENCE [LARGE SCALE MRNA]</scope>
    <source>
        <strain>cv. Columbia</strain>
    </source>
</reference>
<protein>
    <recommendedName>
        <fullName>Uncharacterized protein At2g02148</fullName>
    </recommendedName>
</protein>
<accession>Q56XX3</accession>
<accession>Q9ZUL9</accession>